<reference key="1">
    <citation type="journal article" date="1999" name="DNA Res.">
        <title>Complete genome sequence of an aerobic hyper-thermophilic crenarchaeon, Aeropyrum pernix K1.</title>
        <authorList>
            <person name="Kawarabayasi Y."/>
            <person name="Hino Y."/>
            <person name="Horikawa H."/>
            <person name="Yamazaki S."/>
            <person name="Haikawa Y."/>
            <person name="Jin-no K."/>
            <person name="Takahashi M."/>
            <person name="Sekine M."/>
            <person name="Baba S."/>
            <person name="Ankai A."/>
            <person name="Kosugi H."/>
            <person name="Hosoyama A."/>
            <person name="Fukui S."/>
            <person name="Nagai Y."/>
            <person name="Nishijima K."/>
            <person name="Nakazawa H."/>
            <person name="Takamiya M."/>
            <person name="Masuda S."/>
            <person name="Funahashi T."/>
            <person name="Tanaka T."/>
            <person name="Kudoh Y."/>
            <person name="Yamazaki J."/>
            <person name="Kushida N."/>
            <person name="Oguchi A."/>
            <person name="Aoki K."/>
            <person name="Kubota K."/>
            <person name="Nakamura Y."/>
            <person name="Nomura N."/>
            <person name="Sako Y."/>
            <person name="Kikuchi H."/>
        </authorList>
    </citation>
    <scope>NUCLEOTIDE SEQUENCE [LARGE SCALE GENOMIC DNA]</scope>
    <source>
        <strain>ATCC 700893 / DSM 11879 / JCM 9820 / NBRC 100138 / K1</strain>
    </source>
</reference>
<evidence type="ECO:0000255" key="1">
    <source>
        <dbReference type="HAMAP-Rule" id="MF_01320"/>
    </source>
</evidence>
<evidence type="ECO:0000256" key="2">
    <source>
        <dbReference type="SAM" id="MobiDB-lite"/>
    </source>
</evidence>
<evidence type="ECO:0000305" key="3"/>
<sequence>MGKRLRQQRAGRGTPTYRSRAHIHPGPAKYPPLSGDTLRGKVVELIHDPGRYVPLARVVREDGVEFLMPAAEGMYVGQIIEIGPAAKPEAGNILPLGKIPEGTEVFNVELRPGDGGKLARQAGSYALVVGRAGAKTILRLPSGKDKEVPNDSRATIGIPAGAGRIEKPIMKAGFAYHKWKVKARKWPRVRGVAMNAVDHPFGGGRHQHKGRPSTVARTAPPGRKVGHIAARRTGRRKR</sequence>
<accession>Q9YFN1</accession>
<keyword id="KW-1185">Reference proteome</keyword>
<keyword id="KW-0687">Ribonucleoprotein</keyword>
<keyword id="KW-0689">Ribosomal protein</keyword>
<keyword id="KW-0694">RNA-binding</keyword>
<keyword id="KW-0699">rRNA-binding</keyword>
<feature type="chain" id="PRO_0000129710" description="Large ribosomal subunit protein uL2">
    <location>
        <begin position="1"/>
        <end position="238"/>
    </location>
</feature>
<feature type="region of interest" description="Disordered" evidence="2">
    <location>
        <begin position="1"/>
        <end position="34"/>
    </location>
</feature>
<feature type="region of interest" description="Disordered" evidence="2">
    <location>
        <begin position="197"/>
        <end position="238"/>
    </location>
</feature>
<feature type="compositionally biased region" description="Basic residues" evidence="2">
    <location>
        <begin position="224"/>
        <end position="238"/>
    </location>
</feature>
<organism>
    <name type="scientific">Aeropyrum pernix (strain ATCC 700893 / DSM 11879 / JCM 9820 / NBRC 100138 / K1)</name>
    <dbReference type="NCBI Taxonomy" id="272557"/>
    <lineage>
        <taxon>Archaea</taxon>
        <taxon>Thermoproteota</taxon>
        <taxon>Thermoprotei</taxon>
        <taxon>Desulfurococcales</taxon>
        <taxon>Desulfurococcaceae</taxon>
        <taxon>Aeropyrum</taxon>
    </lineage>
</organism>
<comment type="function">
    <text evidence="1">One of the primary rRNA binding proteins. Required for association of the 30S and 50S subunits to form the 70S ribosome, for tRNA binding and peptide bond formation. It has been suggested to have peptidyltransferase activity; this is somewhat controversial. Makes several contacts with the 16S rRNA in the 70S ribosome.</text>
</comment>
<comment type="subunit">
    <text evidence="1">Part of the 50S ribosomal subunit. Forms a bridge to the 30S subunit in the 70S ribosome.</text>
</comment>
<comment type="similarity">
    <text evidence="1">Belongs to the universal ribosomal protein uL2 family.</text>
</comment>
<protein>
    <recommendedName>
        <fullName evidence="1">Large ribosomal subunit protein uL2</fullName>
    </recommendedName>
    <alternativeName>
        <fullName evidence="3">50S ribosomal protein L2</fullName>
    </alternativeName>
</protein>
<gene>
    <name evidence="1" type="primary">rpl2</name>
    <name type="ordered locus">APE_0218</name>
</gene>
<dbReference type="EMBL" id="BA000002">
    <property type="protein sequence ID" value="BAA79130.1"/>
    <property type="molecule type" value="Genomic_DNA"/>
</dbReference>
<dbReference type="PIR" id="H72778">
    <property type="entry name" value="H72778"/>
</dbReference>
<dbReference type="RefSeq" id="WP_010865576.1">
    <property type="nucleotide sequence ID" value="NC_000854.2"/>
</dbReference>
<dbReference type="SMR" id="Q9YFN1"/>
<dbReference type="STRING" id="272557.APE_0218"/>
<dbReference type="EnsemblBacteria" id="BAA79130">
    <property type="protein sequence ID" value="BAA79130"/>
    <property type="gene ID" value="APE_0218"/>
</dbReference>
<dbReference type="GeneID" id="1445737"/>
<dbReference type="KEGG" id="ape:APE_0218"/>
<dbReference type="PATRIC" id="fig|272557.25.peg.155"/>
<dbReference type="eggNOG" id="arCOG04067">
    <property type="taxonomic scope" value="Archaea"/>
</dbReference>
<dbReference type="Proteomes" id="UP000002518">
    <property type="component" value="Chromosome"/>
</dbReference>
<dbReference type="GO" id="GO:0022625">
    <property type="term" value="C:cytosolic large ribosomal subunit"/>
    <property type="evidence" value="ECO:0007669"/>
    <property type="project" value="TreeGrafter"/>
</dbReference>
<dbReference type="GO" id="GO:0019843">
    <property type="term" value="F:rRNA binding"/>
    <property type="evidence" value="ECO:0007669"/>
    <property type="project" value="UniProtKB-UniRule"/>
</dbReference>
<dbReference type="GO" id="GO:0003735">
    <property type="term" value="F:structural constituent of ribosome"/>
    <property type="evidence" value="ECO:0007669"/>
    <property type="project" value="InterPro"/>
</dbReference>
<dbReference type="GO" id="GO:0002181">
    <property type="term" value="P:cytoplasmic translation"/>
    <property type="evidence" value="ECO:0007669"/>
    <property type="project" value="TreeGrafter"/>
</dbReference>
<dbReference type="FunFam" id="2.30.30.30:FF:000001">
    <property type="entry name" value="50S ribosomal protein L2"/>
    <property type="match status" value="1"/>
</dbReference>
<dbReference type="FunFam" id="4.10.950.10:FF:000002">
    <property type="entry name" value="60S ribosomal protein L2"/>
    <property type="match status" value="1"/>
</dbReference>
<dbReference type="Gene3D" id="2.30.30.30">
    <property type="match status" value="1"/>
</dbReference>
<dbReference type="Gene3D" id="2.40.50.140">
    <property type="entry name" value="Nucleic acid-binding proteins"/>
    <property type="match status" value="1"/>
</dbReference>
<dbReference type="Gene3D" id="4.10.950.10">
    <property type="entry name" value="Ribosomal protein L2, domain 3"/>
    <property type="match status" value="1"/>
</dbReference>
<dbReference type="HAMAP" id="MF_01320_A">
    <property type="entry name" value="Ribosomal_uL2_A"/>
    <property type="match status" value="1"/>
</dbReference>
<dbReference type="InterPro" id="IPR012340">
    <property type="entry name" value="NA-bd_OB-fold"/>
</dbReference>
<dbReference type="InterPro" id="IPR014722">
    <property type="entry name" value="Rib_uL2_dom2"/>
</dbReference>
<dbReference type="InterPro" id="IPR002171">
    <property type="entry name" value="Ribosomal_uL2"/>
</dbReference>
<dbReference type="InterPro" id="IPR023672">
    <property type="entry name" value="Ribosomal_uL2_arc_euk"/>
</dbReference>
<dbReference type="InterPro" id="IPR022669">
    <property type="entry name" value="Ribosomal_uL2_C"/>
</dbReference>
<dbReference type="InterPro" id="IPR022671">
    <property type="entry name" value="Ribosomal_uL2_CS"/>
</dbReference>
<dbReference type="InterPro" id="IPR014726">
    <property type="entry name" value="Ribosomal_uL2_dom3"/>
</dbReference>
<dbReference type="InterPro" id="IPR022666">
    <property type="entry name" value="Ribosomal_uL2_RNA-bd_dom"/>
</dbReference>
<dbReference type="InterPro" id="IPR008991">
    <property type="entry name" value="Translation_prot_SH3-like_sf"/>
</dbReference>
<dbReference type="NCBIfam" id="NF007180">
    <property type="entry name" value="PRK09612.1"/>
    <property type="match status" value="1"/>
</dbReference>
<dbReference type="PANTHER" id="PTHR13691:SF16">
    <property type="entry name" value="LARGE RIBOSOMAL SUBUNIT PROTEIN UL2"/>
    <property type="match status" value="1"/>
</dbReference>
<dbReference type="PANTHER" id="PTHR13691">
    <property type="entry name" value="RIBOSOMAL PROTEIN L2"/>
    <property type="match status" value="1"/>
</dbReference>
<dbReference type="Pfam" id="PF00181">
    <property type="entry name" value="Ribosomal_L2"/>
    <property type="match status" value="1"/>
</dbReference>
<dbReference type="Pfam" id="PF03947">
    <property type="entry name" value="Ribosomal_L2_C"/>
    <property type="match status" value="1"/>
</dbReference>
<dbReference type="PIRSF" id="PIRSF002158">
    <property type="entry name" value="Ribosomal_L2"/>
    <property type="match status" value="1"/>
</dbReference>
<dbReference type="SMART" id="SM01383">
    <property type="entry name" value="Ribosomal_L2"/>
    <property type="match status" value="1"/>
</dbReference>
<dbReference type="SMART" id="SM01382">
    <property type="entry name" value="Ribosomal_L2_C"/>
    <property type="match status" value="1"/>
</dbReference>
<dbReference type="SUPFAM" id="SSF50249">
    <property type="entry name" value="Nucleic acid-binding proteins"/>
    <property type="match status" value="1"/>
</dbReference>
<dbReference type="SUPFAM" id="SSF50104">
    <property type="entry name" value="Translation proteins SH3-like domain"/>
    <property type="match status" value="1"/>
</dbReference>
<dbReference type="PROSITE" id="PS00467">
    <property type="entry name" value="RIBOSOMAL_L2"/>
    <property type="match status" value="1"/>
</dbReference>
<proteinExistence type="inferred from homology"/>
<name>RL2_AERPE</name>